<accession>Q2J0F1</accession>
<reference key="1">
    <citation type="submission" date="2006-01" db="EMBL/GenBank/DDBJ databases">
        <title>Complete sequence of Rhodopseudomonas palustris HaA2.</title>
        <authorList>
            <consortium name="US DOE Joint Genome Institute"/>
            <person name="Copeland A."/>
            <person name="Lucas S."/>
            <person name="Lapidus A."/>
            <person name="Barry K."/>
            <person name="Detter J.C."/>
            <person name="Glavina T."/>
            <person name="Hammon N."/>
            <person name="Israni S."/>
            <person name="Pitluck S."/>
            <person name="Chain P."/>
            <person name="Malfatti S."/>
            <person name="Shin M."/>
            <person name="Vergez L."/>
            <person name="Schmutz J."/>
            <person name="Larimer F."/>
            <person name="Land M."/>
            <person name="Hauser L."/>
            <person name="Pelletier D.A."/>
            <person name="Kyrpides N."/>
            <person name="Anderson I."/>
            <person name="Oda Y."/>
            <person name="Harwood C.S."/>
            <person name="Richardson P."/>
        </authorList>
    </citation>
    <scope>NUCLEOTIDE SEQUENCE [LARGE SCALE GENOMIC DNA]</scope>
    <source>
        <strain>HaA2</strain>
    </source>
</reference>
<organism>
    <name type="scientific">Rhodopseudomonas palustris (strain HaA2)</name>
    <dbReference type="NCBI Taxonomy" id="316058"/>
    <lineage>
        <taxon>Bacteria</taxon>
        <taxon>Pseudomonadati</taxon>
        <taxon>Pseudomonadota</taxon>
        <taxon>Alphaproteobacteria</taxon>
        <taxon>Hyphomicrobiales</taxon>
        <taxon>Nitrobacteraceae</taxon>
        <taxon>Rhodopseudomonas</taxon>
    </lineage>
</organism>
<feature type="chain" id="PRO_0000358678" description="NADH-quinone oxidoreductase subunit C/D">
    <location>
        <begin position="1"/>
        <end position="581"/>
    </location>
</feature>
<feature type="region of interest" description="NADH dehydrogenase I subunit C" evidence="1">
    <location>
        <begin position="1"/>
        <end position="172"/>
    </location>
</feature>
<feature type="region of interest" description="NADH dehydrogenase I subunit D" evidence="1">
    <location>
        <begin position="196"/>
        <end position="581"/>
    </location>
</feature>
<proteinExistence type="inferred from homology"/>
<sequence length="581" mass="65354">MSATDLVSELGARFGDAVLGEQTTRERFPTVWIRPEASAAVHRYLKHEVERPFRMLVDLWAIDETARKHREGQPPSGITIASHLMSHERNADIRLKVGLDAEYPSAKSIAGVYPNAAWYEREAYDMFGVEFEAQPHSLRILLPPGWEGHPMRKTQPGRATERPLFNMTAALFDAKEHALAADPEKFGLPTHRDGVELMILNYGPHSMATHGVFRIVLALDGEEIVAARPDIGFHHRGAEKMAERQTWHNFLPYTDRVDYLGGVMGEMPYLQAVEKACGITVPDRALTVRVMLSEMFRIMNHLLFYGTMAQDTGAMSPVFYMFVDRERGYRVIEAITGARMHPGYFRIGGLSMDLPQGWDRLVREFLDWMPARLADYEGMVLRNEIFQARTKGVAAYDTAMALDWGVTGPGLRATGSAWDVRKARPYSGFENFEFEIPVGHNGDCYDRTVVRVEEIRQSLKIIRQCVDNMPSGPIKADHPLTTPPPRERMLHDIETMIHHFVGASWGPVLPPGETTGQVETVRGLTQFALISDGEPSSYRTRIRTPSFPHLQMISAVAPGMMVADLVAYLGSIDYVMSDVDR</sequence>
<dbReference type="EC" id="7.1.1.-" evidence="1"/>
<dbReference type="EMBL" id="CP000250">
    <property type="protein sequence ID" value="ABD06059.1"/>
    <property type="molecule type" value="Genomic_DNA"/>
</dbReference>
<dbReference type="RefSeq" id="WP_011440247.1">
    <property type="nucleotide sequence ID" value="NC_007778.1"/>
</dbReference>
<dbReference type="SMR" id="Q2J0F1"/>
<dbReference type="STRING" id="316058.RPB_1349"/>
<dbReference type="KEGG" id="rpb:RPB_1349"/>
<dbReference type="eggNOG" id="COG0649">
    <property type="taxonomic scope" value="Bacteria"/>
</dbReference>
<dbReference type="eggNOG" id="COG0852">
    <property type="taxonomic scope" value="Bacteria"/>
</dbReference>
<dbReference type="HOGENOM" id="CLU_015134_3_2_5"/>
<dbReference type="OrthoDB" id="9801496at2"/>
<dbReference type="Proteomes" id="UP000008809">
    <property type="component" value="Chromosome"/>
</dbReference>
<dbReference type="GO" id="GO:0030964">
    <property type="term" value="C:NADH dehydrogenase complex"/>
    <property type="evidence" value="ECO:0007669"/>
    <property type="project" value="InterPro"/>
</dbReference>
<dbReference type="GO" id="GO:0005886">
    <property type="term" value="C:plasma membrane"/>
    <property type="evidence" value="ECO:0007669"/>
    <property type="project" value="UniProtKB-SubCell"/>
</dbReference>
<dbReference type="GO" id="GO:0051287">
    <property type="term" value="F:NAD binding"/>
    <property type="evidence" value="ECO:0007669"/>
    <property type="project" value="InterPro"/>
</dbReference>
<dbReference type="GO" id="GO:0008137">
    <property type="term" value="F:NADH dehydrogenase (ubiquinone) activity"/>
    <property type="evidence" value="ECO:0007669"/>
    <property type="project" value="InterPro"/>
</dbReference>
<dbReference type="GO" id="GO:0050136">
    <property type="term" value="F:NADH:ubiquinone reductase (non-electrogenic) activity"/>
    <property type="evidence" value="ECO:0007669"/>
    <property type="project" value="UniProtKB-UniRule"/>
</dbReference>
<dbReference type="GO" id="GO:0048038">
    <property type="term" value="F:quinone binding"/>
    <property type="evidence" value="ECO:0007669"/>
    <property type="project" value="UniProtKB-KW"/>
</dbReference>
<dbReference type="Gene3D" id="1.10.645.10">
    <property type="entry name" value="Cytochrome-c3 Hydrogenase, chain B"/>
    <property type="match status" value="1"/>
</dbReference>
<dbReference type="Gene3D" id="3.30.460.80">
    <property type="entry name" value="NADH:ubiquinone oxidoreductase, 30kDa subunit"/>
    <property type="match status" value="1"/>
</dbReference>
<dbReference type="HAMAP" id="MF_01359">
    <property type="entry name" value="NDH1_NuoCD_1"/>
    <property type="match status" value="1"/>
</dbReference>
<dbReference type="HAMAP" id="MF_01358">
    <property type="entry name" value="NDH1_NuoD"/>
    <property type="match status" value="1"/>
</dbReference>
<dbReference type="InterPro" id="IPR023062">
    <property type="entry name" value="NADH_DH_suCD"/>
</dbReference>
<dbReference type="InterPro" id="IPR001135">
    <property type="entry name" value="NADH_Q_OxRdtase_suD"/>
</dbReference>
<dbReference type="InterPro" id="IPR037232">
    <property type="entry name" value="NADH_quin_OxRdtase_su_C/D-like"/>
</dbReference>
<dbReference type="InterPro" id="IPR001268">
    <property type="entry name" value="NADH_UbQ_OxRdtase_30kDa_su"/>
</dbReference>
<dbReference type="InterPro" id="IPR014029">
    <property type="entry name" value="NADH_UbQ_OxRdtase_49kDa_CS"/>
</dbReference>
<dbReference type="InterPro" id="IPR022885">
    <property type="entry name" value="NDH1_su_D/H"/>
</dbReference>
<dbReference type="InterPro" id="IPR029014">
    <property type="entry name" value="NiFe-Hase_large"/>
</dbReference>
<dbReference type="NCBIfam" id="TIGR01962">
    <property type="entry name" value="NuoD"/>
    <property type="match status" value="1"/>
</dbReference>
<dbReference type="NCBIfam" id="NF004739">
    <property type="entry name" value="PRK06075.1"/>
    <property type="match status" value="1"/>
</dbReference>
<dbReference type="NCBIfam" id="NF008728">
    <property type="entry name" value="PRK11742.1"/>
    <property type="match status" value="1"/>
</dbReference>
<dbReference type="PANTHER" id="PTHR11993:SF45">
    <property type="entry name" value="NADH-QUINONE OXIDOREDUCTASE SUBUNIT C_D"/>
    <property type="match status" value="1"/>
</dbReference>
<dbReference type="PANTHER" id="PTHR11993">
    <property type="entry name" value="NADH-UBIQUINONE OXIDOREDUCTASE 49 KDA SUBUNIT"/>
    <property type="match status" value="1"/>
</dbReference>
<dbReference type="Pfam" id="PF00329">
    <property type="entry name" value="Complex1_30kDa"/>
    <property type="match status" value="1"/>
</dbReference>
<dbReference type="Pfam" id="PF00346">
    <property type="entry name" value="Complex1_49kDa"/>
    <property type="match status" value="1"/>
</dbReference>
<dbReference type="SUPFAM" id="SSF56762">
    <property type="entry name" value="HydB/Nqo4-like"/>
    <property type="match status" value="1"/>
</dbReference>
<dbReference type="SUPFAM" id="SSF143243">
    <property type="entry name" value="Nqo5-like"/>
    <property type="match status" value="1"/>
</dbReference>
<dbReference type="PROSITE" id="PS00535">
    <property type="entry name" value="COMPLEX1_49K"/>
    <property type="match status" value="1"/>
</dbReference>
<name>NUOCD_RHOP2</name>
<protein>
    <recommendedName>
        <fullName evidence="1">NADH-quinone oxidoreductase subunit C/D</fullName>
        <ecNumber evidence="1">7.1.1.-</ecNumber>
    </recommendedName>
    <alternativeName>
        <fullName evidence="1">NADH dehydrogenase I subunit C/D</fullName>
    </alternativeName>
    <alternativeName>
        <fullName evidence="1">NDH-1 subunit C/D</fullName>
    </alternativeName>
</protein>
<evidence type="ECO:0000255" key="1">
    <source>
        <dbReference type="HAMAP-Rule" id="MF_01359"/>
    </source>
</evidence>
<gene>
    <name evidence="1" type="primary">nuoC</name>
    <name evidence="1" type="synonym">nuoCD</name>
    <name evidence="1" type="synonym">nuoD</name>
    <name type="ordered locus">RPB_1349</name>
</gene>
<comment type="function">
    <text evidence="1">NDH-1 shuttles electrons from NADH, via FMN and iron-sulfur (Fe-S) centers, to quinones in the respiratory chain. The immediate electron acceptor for the enzyme in this species is believed to be ubiquinone. Couples the redox reaction to proton translocation (for every two electrons transferred, four hydrogen ions are translocated across the cytoplasmic membrane), and thus conserves the redox energy in a proton gradient.</text>
</comment>
<comment type="catalytic activity">
    <reaction evidence="1">
        <text>a quinone + NADH + 5 H(+)(in) = a quinol + NAD(+) + 4 H(+)(out)</text>
        <dbReference type="Rhea" id="RHEA:57888"/>
        <dbReference type="ChEBI" id="CHEBI:15378"/>
        <dbReference type="ChEBI" id="CHEBI:24646"/>
        <dbReference type="ChEBI" id="CHEBI:57540"/>
        <dbReference type="ChEBI" id="CHEBI:57945"/>
        <dbReference type="ChEBI" id="CHEBI:132124"/>
    </reaction>
</comment>
<comment type="subunit">
    <text evidence="1">NDH-1 is composed of 13 different subunits. Subunits NuoB, CD, E, F, and G constitute the peripheral sector of the complex.</text>
</comment>
<comment type="subcellular location">
    <subcellularLocation>
        <location evidence="1">Cell inner membrane</location>
        <topology evidence="1">Peripheral membrane protein</topology>
        <orientation evidence="1">Cytoplasmic side</orientation>
    </subcellularLocation>
</comment>
<comment type="similarity">
    <text evidence="1">In the N-terminal section; belongs to the complex I 30 kDa subunit family.</text>
</comment>
<comment type="similarity">
    <text evidence="1">In the C-terminal section; belongs to the complex I 49 kDa subunit family.</text>
</comment>
<keyword id="KW-0997">Cell inner membrane</keyword>
<keyword id="KW-1003">Cell membrane</keyword>
<keyword id="KW-0472">Membrane</keyword>
<keyword id="KW-0511">Multifunctional enzyme</keyword>
<keyword id="KW-0520">NAD</keyword>
<keyword id="KW-0874">Quinone</keyword>
<keyword id="KW-1185">Reference proteome</keyword>
<keyword id="KW-1278">Translocase</keyword>
<keyword id="KW-0813">Transport</keyword>
<keyword id="KW-0830">Ubiquinone</keyword>